<keyword id="KW-0067">ATP-binding</keyword>
<keyword id="KW-0997">Cell inner membrane</keyword>
<keyword id="KW-1003">Cell membrane</keyword>
<keyword id="KW-0472">Membrane</keyword>
<keyword id="KW-0547">Nucleotide-binding</keyword>
<keyword id="KW-1185">Reference proteome</keyword>
<keyword id="KW-1278">Translocase</keyword>
<keyword id="KW-0813">Transport</keyword>
<feature type="chain" id="PRO_0000279918" description="Aliphatic sulfonates import ATP-binding protein SsuB">
    <location>
        <begin position="1"/>
        <end position="238"/>
    </location>
</feature>
<feature type="domain" description="ABC transporter" evidence="1">
    <location>
        <begin position="7"/>
        <end position="221"/>
    </location>
</feature>
<feature type="binding site" evidence="1">
    <location>
        <begin position="39"/>
        <end position="46"/>
    </location>
    <ligand>
        <name>ATP</name>
        <dbReference type="ChEBI" id="CHEBI:30616"/>
    </ligand>
</feature>
<comment type="function">
    <text evidence="1">Part of the ABC transporter complex SsuABC involved in aliphatic sulfonates import. Responsible for energy coupling to the transport system.</text>
</comment>
<comment type="catalytic activity">
    <reaction evidence="1">
        <text>ATP + H2O + aliphatic sulfonate-[sulfonate-binding protein]Side 1 = ADP + phosphate + aliphatic sulfonateSide 2 + [sulfonate-binding protein]Side 1.</text>
        <dbReference type="EC" id="7.6.2.14"/>
    </reaction>
</comment>
<comment type="subunit">
    <text evidence="1">The complex is composed of two ATP-binding proteins (SsuB), two transmembrane proteins (SsuC) and a solute-binding protein (SsuA).</text>
</comment>
<comment type="subcellular location">
    <subcellularLocation>
        <location evidence="1">Cell inner membrane</location>
        <topology evidence="1">Peripheral membrane protein</topology>
    </subcellularLocation>
</comment>
<comment type="similarity">
    <text evidence="1">Belongs to the ABC transporter superfamily. Aliphatic sulfonates importer (TC 3.A.1.17.2) family.</text>
</comment>
<protein>
    <recommendedName>
        <fullName evidence="1">Aliphatic sulfonates import ATP-binding protein SsuB</fullName>
        <ecNumber evidence="1">7.6.2.14</ecNumber>
    </recommendedName>
</protein>
<name>SSUB_GRABC</name>
<accession>Q0BUR6</accession>
<dbReference type="EC" id="7.6.2.14" evidence="1"/>
<dbReference type="EMBL" id="CP000394">
    <property type="protein sequence ID" value="ABI61436.1"/>
    <property type="molecule type" value="Genomic_DNA"/>
</dbReference>
<dbReference type="RefSeq" id="WP_011631246.1">
    <property type="nucleotide sequence ID" value="NC_008343.2"/>
</dbReference>
<dbReference type="SMR" id="Q0BUR6"/>
<dbReference type="STRING" id="391165.GbCGDNIH1_0538"/>
<dbReference type="KEGG" id="gbe:GbCGDNIH1_0538"/>
<dbReference type="eggNOG" id="COG1116">
    <property type="taxonomic scope" value="Bacteria"/>
</dbReference>
<dbReference type="HOGENOM" id="CLU_000604_1_22_5"/>
<dbReference type="OrthoDB" id="7336028at2"/>
<dbReference type="Proteomes" id="UP000001963">
    <property type="component" value="Chromosome"/>
</dbReference>
<dbReference type="GO" id="GO:0005886">
    <property type="term" value="C:plasma membrane"/>
    <property type="evidence" value="ECO:0007669"/>
    <property type="project" value="UniProtKB-SubCell"/>
</dbReference>
<dbReference type="GO" id="GO:0005524">
    <property type="term" value="F:ATP binding"/>
    <property type="evidence" value="ECO:0007669"/>
    <property type="project" value="UniProtKB-KW"/>
</dbReference>
<dbReference type="GO" id="GO:0016887">
    <property type="term" value="F:ATP hydrolysis activity"/>
    <property type="evidence" value="ECO:0007669"/>
    <property type="project" value="InterPro"/>
</dbReference>
<dbReference type="Gene3D" id="3.40.50.300">
    <property type="entry name" value="P-loop containing nucleotide triphosphate hydrolases"/>
    <property type="match status" value="1"/>
</dbReference>
<dbReference type="InterPro" id="IPR003593">
    <property type="entry name" value="AAA+_ATPase"/>
</dbReference>
<dbReference type="InterPro" id="IPR003439">
    <property type="entry name" value="ABC_transporter-like_ATP-bd"/>
</dbReference>
<dbReference type="InterPro" id="IPR017871">
    <property type="entry name" value="ABC_transporter-like_CS"/>
</dbReference>
<dbReference type="InterPro" id="IPR050166">
    <property type="entry name" value="ABC_transporter_ATP-bind"/>
</dbReference>
<dbReference type="InterPro" id="IPR027417">
    <property type="entry name" value="P-loop_NTPase"/>
</dbReference>
<dbReference type="PANTHER" id="PTHR42788:SF17">
    <property type="entry name" value="ALIPHATIC SULFONATES IMPORT ATP-BINDING PROTEIN SSUB"/>
    <property type="match status" value="1"/>
</dbReference>
<dbReference type="PANTHER" id="PTHR42788">
    <property type="entry name" value="TAURINE IMPORT ATP-BINDING PROTEIN-RELATED"/>
    <property type="match status" value="1"/>
</dbReference>
<dbReference type="Pfam" id="PF00005">
    <property type="entry name" value="ABC_tran"/>
    <property type="match status" value="1"/>
</dbReference>
<dbReference type="SMART" id="SM00382">
    <property type="entry name" value="AAA"/>
    <property type="match status" value="1"/>
</dbReference>
<dbReference type="SUPFAM" id="SSF52540">
    <property type="entry name" value="P-loop containing nucleoside triphosphate hydrolases"/>
    <property type="match status" value="1"/>
</dbReference>
<dbReference type="PROSITE" id="PS00211">
    <property type="entry name" value="ABC_TRANSPORTER_1"/>
    <property type="match status" value="1"/>
</dbReference>
<dbReference type="PROSITE" id="PS50893">
    <property type="entry name" value="ABC_TRANSPORTER_2"/>
    <property type="match status" value="1"/>
</dbReference>
<dbReference type="PROSITE" id="PS51291">
    <property type="entry name" value="SSUB"/>
    <property type="match status" value="1"/>
</dbReference>
<organism>
    <name type="scientific">Granulibacter bethesdensis (strain ATCC BAA-1260 / CGDNIH1)</name>
    <dbReference type="NCBI Taxonomy" id="391165"/>
    <lineage>
        <taxon>Bacteria</taxon>
        <taxon>Pseudomonadati</taxon>
        <taxon>Pseudomonadota</taxon>
        <taxon>Alphaproteobacteria</taxon>
        <taxon>Acetobacterales</taxon>
        <taxon>Acetobacteraceae</taxon>
        <taxon>Granulibacter</taxon>
    </lineage>
</organism>
<proteinExistence type="inferred from homology"/>
<reference key="1">
    <citation type="journal article" date="2007" name="J. Bacteriol.">
        <title>Genome sequence analysis of the emerging human pathogenic acetic acid bacterium Granulibacter bethesdensis.</title>
        <authorList>
            <person name="Greenberg D.E."/>
            <person name="Porcella S.F."/>
            <person name="Zelazny A.M."/>
            <person name="Virtaneva K."/>
            <person name="Sturdevant D.E."/>
            <person name="Kupko J.J. III"/>
            <person name="Barbian K.D."/>
            <person name="Babar A."/>
            <person name="Dorward D.W."/>
            <person name="Holland S.M."/>
        </authorList>
    </citation>
    <scope>NUCLEOTIDE SEQUENCE [LARGE SCALE GENOMIC DNA]</scope>
    <source>
        <strain>ATCC BAA-1260 / CGDNIH1</strain>
    </source>
</reference>
<evidence type="ECO:0000255" key="1">
    <source>
        <dbReference type="HAMAP-Rule" id="MF_01724"/>
    </source>
</evidence>
<sequence length="238" mass="26081">MTQTPVVSLHQVHQQFGSTTILSGLSLDIAPGEFVALLGRSGSGKTTLLRLLAGLDTPSQGHLRLPERRAVVFQEPRLLPWKNVWRNVVLGVKDRPTRDHAVEALREVELAHRADAWPLTLSGGEAQRAGLARALVRSPELLLLDEPFAALDALTRLRMQSLVARLWEVHRTAVLLVTHDVDEALLLADRVVVLEHGRIAAERTISIPRPRRPGDAAFASLRLELLGLLGVREALAAA</sequence>
<gene>
    <name evidence="1" type="primary">ssuB</name>
    <name type="ordered locus">GbCGDNIH1_0538</name>
</gene>